<accession>A9BIE9</accession>
<sequence>MRAVVQRVSQASVTISDNIVAQIEKGLLVFLGISKIDQVSDISWMADKIVNLRIFEDDQNKMNRSLLDIMGDMIVVSQFTLYGDCRKGRRPSFTDSATPEKAKVLYDNFLSYLKEKYPINVQQGEFQAHMKVNIVNDGPVTLLLDSQKLF</sequence>
<comment type="function">
    <text evidence="1">An aminoacyl-tRNA editing enzyme that deacylates mischarged D-aminoacyl-tRNAs. Also deacylates mischarged glycyl-tRNA(Ala), protecting cells against glycine mischarging by AlaRS. Acts via tRNA-based rather than protein-based catalysis; rejects L-amino acids rather than detecting D-amino acids in the active site. By recycling D-aminoacyl-tRNA to D-amino acids and free tRNA molecules, this enzyme counteracts the toxicity associated with the formation of D-aminoacyl-tRNA entities in vivo and helps enforce protein L-homochirality.</text>
</comment>
<comment type="catalytic activity">
    <reaction evidence="1">
        <text>glycyl-tRNA(Ala) + H2O = tRNA(Ala) + glycine + H(+)</text>
        <dbReference type="Rhea" id="RHEA:53744"/>
        <dbReference type="Rhea" id="RHEA-COMP:9657"/>
        <dbReference type="Rhea" id="RHEA-COMP:13640"/>
        <dbReference type="ChEBI" id="CHEBI:15377"/>
        <dbReference type="ChEBI" id="CHEBI:15378"/>
        <dbReference type="ChEBI" id="CHEBI:57305"/>
        <dbReference type="ChEBI" id="CHEBI:78442"/>
        <dbReference type="ChEBI" id="CHEBI:78522"/>
        <dbReference type="EC" id="3.1.1.96"/>
    </reaction>
</comment>
<comment type="catalytic activity">
    <reaction evidence="1">
        <text>a D-aminoacyl-tRNA + H2O = a tRNA + a D-alpha-amino acid + H(+)</text>
        <dbReference type="Rhea" id="RHEA:13953"/>
        <dbReference type="Rhea" id="RHEA-COMP:10123"/>
        <dbReference type="Rhea" id="RHEA-COMP:10124"/>
        <dbReference type="ChEBI" id="CHEBI:15377"/>
        <dbReference type="ChEBI" id="CHEBI:15378"/>
        <dbReference type="ChEBI" id="CHEBI:59871"/>
        <dbReference type="ChEBI" id="CHEBI:78442"/>
        <dbReference type="ChEBI" id="CHEBI:79333"/>
        <dbReference type="EC" id="3.1.1.96"/>
    </reaction>
</comment>
<comment type="subunit">
    <text evidence="1">Homodimer.</text>
</comment>
<comment type="subcellular location">
    <subcellularLocation>
        <location evidence="1">Cytoplasm</location>
    </subcellularLocation>
</comment>
<comment type="domain">
    <text evidence="1">A Gly-cisPro motif from one monomer fits into the active site of the other monomer to allow specific chiral rejection of L-amino acids.</text>
</comment>
<comment type="similarity">
    <text evidence="1">Belongs to the DTD family.</text>
</comment>
<feature type="chain" id="PRO_1000081660" description="D-aminoacyl-tRNA deacylase">
    <location>
        <begin position="1"/>
        <end position="150"/>
    </location>
</feature>
<feature type="short sequence motif" description="Gly-cisPro motif, important for rejection of L-amino acids" evidence="1">
    <location>
        <begin position="138"/>
        <end position="139"/>
    </location>
</feature>
<name>DTD_PETMO</name>
<gene>
    <name evidence="1" type="primary">dtd</name>
    <name type="ordered locus">Pmob_1934</name>
</gene>
<evidence type="ECO:0000255" key="1">
    <source>
        <dbReference type="HAMAP-Rule" id="MF_00518"/>
    </source>
</evidence>
<dbReference type="EC" id="3.1.1.96" evidence="1"/>
<dbReference type="EMBL" id="CP000879">
    <property type="protein sequence ID" value="ABX32621.1"/>
    <property type="molecule type" value="Genomic_DNA"/>
</dbReference>
<dbReference type="RefSeq" id="WP_012209718.1">
    <property type="nucleotide sequence ID" value="NC_010003.1"/>
</dbReference>
<dbReference type="SMR" id="A9BIE9"/>
<dbReference type="STRING" id="403833.Pmob_1934"/>
<dbReference type="KEGG" id="pmo:Pmob_1934"/>
<dbReference type="eggNOG" id="COG1490">
    <property type="taxonomic scope" value="Bacteria"/>
</dbReference>
<dbReference type="HOGENOM" id="CLU_076901_1_0_0"/>
<dbReference type="OrthoDB" id="9801395at2"/>
<dbReference type="Proteomes" id="UP000000789">
    <property type="component" value="Chromosome"/>
</dbReference>
<dbReference type="GO" id="GO:0005737">
    <property type="term" value="C:cytoplasm"/>
    <property type="evidence" value="ECO:0007669"/>
    <property type="project" value="UniProtKB-SubCell"/>
</dbReference>
<dbReference type="GO" id="GO:0051500">
    <property type="term" value="F:D-tyrosyl-tRNA(Tyr) deacylase activity"/>
    <property type="evidence" value="ECO:0007669"/>
    <property type="project" value="TreeGrafter"/>
</dbReference>
<dbReference type="GO" id="GO:0106026">
    <property type="term" value="F:Gly-tRNA(Ala) deacylase activity"/>
    <property type="evidence" value="ECO:0007669"/>
    <property type="project" value="UniProtKB-UniRule"/>
</dbReference>
<dbReference type="GO" id="GO:0043908">
    <property type="term" value="F:Ser(Gly)-tRNA(Ala) hydrolase activity"/>
    <property type="evidence" value="ECO:0007669"/>
    <property type="project" value="UniProtKB-UniRule"/>
</dbReference>
<dbReference type="GO" id="GO:0000049">
    <property type="term" value="F:tRNA binding"/>
    <property type="evidence" value="ECO:0007669"/>
    <property type="project" value="UniProtKB-UniRule"/>
</dbReference>
<dbReference type="GO" id="GO:0019478">
    <property type="term" value="P:D-amino acid catabolic process"/>
    <property type="evidence" value="ECO:0007669"/>
    <property type="project" value="UniProtKB-UniRule"/>
</dbReference>
<dbReference type="CDD" id="cd00563">
    <property type="entry name" value="Dtyr_deacylase"/>
    <property type="match status" value="1"/>
</dbReference>
<dbReference type="FunFam" id="3.50.80.10:FF:000001">
    <property type="entry name" value="D-aminoacyl-tRNA deacylase"/>
    <property type="match status" value="1"/>
</dbReference>
<dbReference type="Gene3D" id="3.50.80.10">
    <property type="entry name" value="D-tyrosyl-tRNA(Tyr) deacylase"/>
    <property type="match status" value="1"/>
</dbReference>
<dbReference type="HAMAP" id="MF_00518">
    <property type="entry name" value="Deacylase_Dtd"/>
    <property type="match status" value="1"/>
</dbReference>
<dbReference type="InterPro" id="IPR003732">
    <property type="entry name" value="Daa-tRNA_deacyls_DTD"/>
</dbReference>
<dbReference type="InterPro" id="IPR023509">
    <property type="entry name" value="DTD-like_sf"/>
</dbReference>
<dbReference type="NCBIfam" id="TIGR00256">
    <property type="entry name" value="D-aminoacyl-tRNA deacylase"/>
    <property type="match status" value="1"/>
</dbReference>
<dbReference type="PANTHER" id="PTHR10472:SF5">
    <property type="entry name" value="D-AMINOACYL-TRNA DEACYLASE 1"/>
    <property type="match status" value="1"/>
</dbReference>
<dbReference type="PANTHER" id="PTHR10472">
    <property type="entry name" value="D-TYROSYL-TRNA TYR DEACYLASE"/>
    <property type="match status" value="1"/>
</dbReference>
<dbReference type="Pfam" id="PF02580">
    <property type="entry name" value="Tyr_Deacylase"/>
    <property type="match status" value="1"/>
</dbReference>
<dbReference type="SUPFAM" id="SSF69500">
    <property type="entry name" value="DTD-like"/>
    <property type="match status" value="1"/>
</dbReference>
<reference key="1">
    <citation type="submission" date="2007-11" db="EMBL/GenBank/DDBJ databases">
        <title>Complete sequence of Petroga mobilis SJ95.</title>
        <authorList>
            <consortium name="US DOE Joint Genome Institute"/>
            <person name="Copeland A."/>
            <person name="Lucas S."/>
            <person name="Lapidus A."/>
            <person name="Barry K."/>
            <person name="Glavina del Rio T."/>
            <person name="Dalin E."/>
            <person name="Tice H."/>
            <person name="Pitluck S."/>
            <person name="Meincke L."/>
            <person name="Brettin T."/>
            <person name="Bruce D."/>
            <person name="Detter J.C."/>
            <person name="Han C."/>
            <person name="Kuske C.R."/>
            <person name="Schmutz J."/>
            <person name="Larimer F."/>
            <person name="Land M."/>
            <person name="Hauser L."/>
            <person name="Kyrpides N."/>
            <person name="Mikhailova N."/>
            <person name="Noll K."/>
            <person name="Richardson P."/>
        </authorList>
    </citation>
    <scope>NUCLEOTIDE SEQUENCE [LARGE SCALE GENOMIC DNA]</scope>
    <source>
        <strain>DSM 10674 / SJ95</strain>
    </source>
</reference>
<organism>
    <name type="scientific">Petrotoga mobilis (strain DSM 10674 / SJ95)</name>
    <dbReference type="NCBI Taxonomy" id="403833"/>
    <lineage>
        <taxon>Bacteria</taxon>
        <taxon>Thermotogati</taxon>
        <taxon>Thermotogota</taxon>
        <taxon>Thermotogae</taxon>
        <taxon>Petrotogales</taxon>
        <taxon>Petrotogaceae</taxon>
        <taxon>Petrotoga</taxon>
    </lineage>
</organism>
<proteinExistence type="inferred from homology"/>
<protein>
    <recommendedName>
        <fullName evidence="1">D-aminoacyl-tRNA deacylase</fullName>
        <shortName evidence="1">DTD</shortName>
        <ecNumber evidence="1">3.1.1.96</ecNumber>
    </recommendedName>
    <alternativeName>
        <fullName evidence="1">Gly-tRNA(Ala) deacylase</fullName>
    </alternativeName>
</protein>
<keyword id="KW-0963">Cytoplasm</keyword>
<keyword id="KW-0378">Hydrolase</keyword>
<keyword id="KW-0694">RNA-binding</keyword>
<keyword id="KW-0820">tRNA-binding</keyword>